<comment type="similarity">
    <text evidence="1">Belongs to the CinA family.</text>
</comment>
<name>CINA_DESRM</name>
<sequence length="411" mass="44342">MQAEIIFTGTELLVGEVLNSHAQYLGRRLTEMGIEVIQHTTVGDYWGRMGLVLLQALERADLIFITGGLGPTIDDLTKETVAEVLELDMKLDEASLEAIREHFAKRGMEMPDNNTKQAYFPEGARVLPNTRGTAPGAIVEVDKKAIIILPGPPWEMETMFDNSVVSYLNSLPHRGTLCTSKTFRLTGIGESTVQELIDDLCGMGNPEISFLVNPGVVEVRVTGQGATLEQATGLVQNLSEQVRKRLFQYIFAEDDEKIEQVVGQMLIDAGLTIAVAESCTGGLIEARLSDIPGASRYLVGGVVAYTKQVKERILGVPADTLAQFGAVSRQTAIAMAEGVRRELGSSIGLAVTGVAGPTSSEGKPVGLVYIALSSPTGVCYREYRFPGERKAIRSGTVNAALKMAKHFLQGK</sequence>
<keyword id="KW-1185">Reference proteome</keyword>
<gene>
    <name evidence="1" type="primary">cinA</name>
    <name type="ordered locus">Dred_1922</name>
</gene>
<reference key="1">
    <citation type="submission" date="2007-03" db="EMBL/GenBank/DDBJ databases">
        <title>Complete sequence of Desulfotomaculum reducens MI-1.</title>
        <authorList>
            <consortium name="US DOE Joint Genome Institute"/>
            <person name="Copeland A."/>
            <person name="Lucas S."/>
            <person name="Lapidus A."/>
            <person name="Barry K."/>
            <person name="Detter J.C."/>
            <person name="Glavina del Rio T."/>
            <person name="Hammon N."/>
            <person name="Israni S."/>
            <person name="Dalin E."/>
            <person name="Tice H."/>
            <person name="Pitluck S."/>
            <person name="Sims D."/>
            <person name="Brettin T."/>
            <person name="Bruce D."/>
            <person name="Han C."/>
            <person name="Tapia R."/>
            <person name="Schmutz J."/>
            <person name="Larimer F."/>
            <person name="Land M."/>
            <person name="Hauser L."/>
            <person name="Kyrpides N."/>
            <person name="Kim E."/>
            <person name="Tebo B.M."/>
            <person name="Richardson P."/>
        </authorList>
    </citation>
    <scope>NUCLEOTIDE SEQUENCE [LARGE SCALE GENOMIC DNA]</scope>
    <source>
        <strain>ATCC BAA-1160 / DSM 100696 / MI-1</strain>
    </source>
</reference>
<accession>A4J5U0</accession>
<feature type="chain" id="PRO_1000071772" description="Putative competence-damage inducible protein">
    <location>
        <begin position="1"/>
        <end position="411"/>
    </location>
</feature>
<evidence type="ECO:0000255" key="1">
    <source>
        <dbReference type="HAMAP-Rule" id="MF_00226"/>
    </source>
</evidence>
<protein>
    <recommendedName>
        <fullName evidence="1">Putative competence-damage inducible protein</fullName>
    </recommendedName>
</protein>
<dbReference type="EMBL" id="CP000612">
    <property type="protein sequence ID" value="ABO50443.1"/>
    <property type="molecule type" value="Genomic_DNA"/>
</dbReference>
<dbReference type="SMR" id="A4J5U0"/>
<dbReference type="STRING" id="349161.Dred_1922"/>
<dbReference type="KEGG" id="drm:Dred_1922"/>
<dbReference type="eggNOG" id="COG1058">
    <property type="taxonomic scope" value="Bacteria"/>
</dbReference>
<dbReference type="eggNOG" id="COG1546">
    <property type="taxonomic scope" value="Bacteria"/>
</dbReference>
<dbReference type="HOGENOM" id="CLU_030805_9_3_9"/>
<dbReference type="Proteomes" id="UP000001556">
    <property type="component" value="Chromosome"/>
</dbReference>
<dbReference type="CDD" id="cd00885">
    <property type="entry name" value="cinA"/>
    <property type="match status" value="1"/>
</dbReference>
<dbReference type="Gene3D" id="3.30.70.2860">
    <property type="match status" value="1"/>
</dbReference>
<dbReference type="Gene3D" id="3.90.950.20">
    <property type="entry name" value="CinA-like"/>
    <property type="match status" value="1"/>
</dbReference>
<dbReference type="Gene3D" id="3.40.980.10">
    <property type="entry name" value="MoaB/Mog-like domain"/>
    <property type="match status" value="1"/>
</dbReference>
<dbReference type="HAMAP" id="MF_00226_B">
    <property type="entry name" value="CinA_B"/>
    <property type="match status" value="1"/>
</dbReference>
<dbReference type="InterPro" id="IPR050101">
    <property type="entry name" value="CinA"/>
</dbReference>
<dbReference type="InterPro" id="IPR036653">
    <property type="entry name" value="CinA-like_C"/>
</dbReference>
<dbReference type="InterPro" id="IPR008136">
    <property type="entry name" value="CinA_C"/>
</dbReference>
<dbReference type="InterPro" id="IPR041424">
    <property type="entry name" value="CinA_KH"/>
</dbReference>
<dbReference type="InterPro" id="IPR008135">
    <property type="entry name" value="Competence-induced_CinA"/>
</dbReference>
<dbReference type="InterPro" id="IPR036425">
    <property type="entry name" value="MoaB/Mog-like_dom_sf"/>
</dbReference>
<dbReference type="InterPro" id="IPR001453">
    <property type="entry name" value="MoaB/Mog_dom"/>
</dbReference>
<dbReference type="NCBIfam" id="TIGR00200">
    <property type="entry name" value="cinA_nterm"/>
    <property type="match status" value="1"/>
</dbReference>
<dbReference type="NCBIfam" id="TIGR00199">
    <property type="entry name" value="PncC_domain"/>
    <property type="match status" value="1"/>
</dbReference>
<dbReference type="NCBIfam" id="NF001813">
    <property type="entry name" value="PRK00549.1"/>
    <property type="match status" value="1"/>
</dbReference>
<dbReference type="PANTHER" id="PTHR13939">
    <property type="entry name" value="NICOTINAMIDE-NUCLEOTIDE AMIDOHYDROLASE PNCC"/>
    <property type="match status" value="1"/>
</dbReference>
<dbReference type="PANTHER" id="PTHR13939:SF0">
    <property type="entry name" value="NMN AMIDOHYDROLASE-LIKE PROTEIN YFAY"/>
    <property type="match status" value="1"/>
</dbReference>
<dbReference type="Pfam" id="PF02464">
    <property type="entry name" value="CinA"/>
    <property type="match status" value="1"/>
</dbReference>
<dbReference type="Pfam" id="PF18146">
    <property type="entry name" value="CinA_KH"/>
    <property type="match status" value="1"/>
</dbReference>
<dbReference type="Pfam" id="PF00994">
    <property type="entry name" value="MoCF_biosynth"/>
    <property type="match status" value="1"/>
</dbReference>
<dbReference type="PIRSF" id="PIRSF006728">
    <property type="entry name" value="CinA"/>
    <property type="match status" value="1"/>
</dbReference>
<dbReference type="SMART" id="SM00852">
    <property type="entry name" value="MoCF_biosynth"/>
    <property type="match status" value="1"/>
</dbReference>
<dbReference type="SUPFAM" id="SSF142433">
    <property type="entry name" value="CinA-like"/>
    <property type="match status" value="1"/>
</dbReference>
<dbReference type="SUPFAM" id="SSF53218">
    <property type="entry name" value="Molybdenum cofactor biosynthesis proteins"/>
    <property type="match status" value="1"/>
</dbReference>
<organism>
    <name type="scientific">Desulforamulus reducens (strain ATCC BAA-1160 / DSM 100696 / MI-1)</name>
    <name type="common">Desulfotomaculum reducens</name>
    <dbReference type="NCBI Taxonomy" id="349161"/>
    <lineage>
        <taxon>Bacteria</taxon>
        <taxon>Bacillati</taxon>
        <taxon>Bacillota</taxon>
        <taxon>Clostridia</taxon>
        <taxon>Eubacteriales</taxon>
        <taxon>Peptococcaceae</taxon>
        <taxon>Desulforamulus</taxon>
    </lineage>
</organism>
<proteinExistence type="inferred from homology"/>